<name>YCF15_TOBAC</name>
<gene>
    <name type="primary">ycf15-A</name>
</gene>
<gene>
    <name type="primary">ycf15-B</name>
</gene>
<sequence>MLLLKHGRIEILDQNTMYGWYELPKQEFLNSKQPVQIFTTKKYWILFRIGPERRRKAGMPTGVYYIEFTR</sequence>
<proteinExistence type="uncertain"/>
<geneLocation type="chloroplast"/>
<protein>
    <recommendedName>
        <fullName>Putative uncharacterized protein ycf15</fullName>
    </recommendedName>
    <alternativeName>
        <fullName>ORF 70</fullName>
    </alternativeName>
    <alternativeName>
        <fullName>ORF 87</fullName>
    </alternativeName>
</protein>
<feature type="chain" id="PRO_0000217314" description="Putative uncharacterized protein ycf15">
    <location>
        <begin position="1"/>
        <end position="70"/>
    </location>
</feature>
<accession>P12195</accession>
<dbReference type="EMBL" id="Z00044">
    <property type="protein sequence ID" value="CAA77386.1"/>
    <property type="status" value="ALT_INIT"/>
    <property type="molecule type" value="Genomic_DNA"/>
</dbReference>
<dbReference type="EMBL" id="Z00044">
    <property type="protein sequence ID" value="CAA77407.1"/>
    <property type="status" value="ALT_INIT"/>
    <property type="molecule type" value="Genomic_DNA"/>
</dbReference>
<dbReference type="PIR" id="A05206">
    <property type="entry name" value="A05206"/>
</dbReference>
<dbReference type="Proteomes" id="UP000084051">
    <property type="component" value="Unplaced"/>
</dbReference>
<dbReference type="GO" id="GO:0009507">
    <property type="term" value="C:chloroplast"/>
    <property type="evidence" value="ECO:0007669"/>
    <property type="project" value="UniProtKB-SubCell"/>
</dbReference>
<dbReference type="InterPro" id="IPR019645">
    <property type="entry name" value="Uncharacterised_Ycf15"/>
</dbReference>
<dbReference type="Pfam" id="PF10705">
    <property type="entry name" value="Ycf15"/>
    <property type="match status" value="1"/>
</dbReference>
<reference key="1">
    <citation type="journal article" date="1986" name="EMBO J.">
        <title>The complete nucleotide sequence of the tobacco chloroplast genome: its gene organization and expression.</title>
        <authorList>
            <person name="Shinozaki K."/>
            <person name="Ohme M."/>
            <person name="Tanaka M."/>
            <person name="Wakasugi T."/>
            <person name="Hayashida N."/>
            <person name="Matsubayashi T."/>
            <person name="Zaita N."/>
            <person name="Chunwongse J."/>
            <person name="Obokata J."/>
            <person name="Yamaguchi-Shinozaki K."/>
            <person name="Ohto C."/>
            <person name="Torazawa K."/>
            <person name="Meng B.-Y."/>
            <person name="Sugita M."/>
            <person name="Deno H."/>
            <person name="Kamogashira T."/>
            <person name="Yamada K."/>
            <person name="Kusuda J."/>
            <person name="Takaiwa F."/>
            <person name="Kato A."/>
            <person name="Tohdoh N."/>
            <person name="Shimada H."/>
            <person name="Sugiura M."/>
        </authorList>
    </citation>
    <scope>NUCLEOTIDE SEQUENCE [LARGE SCALE GENOMIC DNA]</scope>
    <source>
        <strain>cv. Bright Yellow 4</strain>
    </source>
</reference>
<reference key="2">
    <citation type="journal article" date="2001" name="Plant Mol. Biol.">
        <title>The plastid chromosome of spinach (Spinacia oleracea): complete nucleotide sequence and gene organization.</title>
        <authorList>
            <person name="Schmitz-Linneweber C."/>
            <person name="Maier R.M."/>
            <person name="Alcaraz J.-P."/>
            <person name="Cottet A."/>
            <person name="Herrmann R.G."/>
            <person name="Mache R."/>
        </authorList>
    </citation>
    <scope>TRANSCRIPT ANALYSIS</scope>
    <scope>SUGGESTION THAT IT IS A PSEUDOGENE</scope>
</reference>
<evidence type="ECO:0000305" key="1"/>
<comment type="subcellular location">
    <subcellularLocation>
        <location>Plastid</location>
        <location>Chloroplast</location>
    </subcellularLocation>
</comment>
<comment type="similarity">
    <text evidence="1">Belongs to the ycf15 family.</text>
</comment>
<comment type="caution">
    <text evidence="1">Could be the product of a pseudogene. It is transcribed.</text>
</comment>
<comment type="sequence caution" evidence="1">
    <conflict type="erroneous initiation">
        <sequence resource="EMBL-CDS" id="CAA77386"/>
    </conflict>
</comment>
<comment type="sequence caution" evidence="1">
    <conflict type="erroneous initiation">
        <sequence resource="EMBL-CDS" id="CAA77407"/>
    </conflict>
</comment>
<organism>
    <name type="scientific">Nicotiana tabacum</name>
    <name type="common">Common tobacco</name>
    <dbReference type="NCBI Taxonomy" id="4097"/>
    <lineage>
        <taxon>Eukaryota</taxon>
        <taxon>Viridiplantae</taxon>
        <taxon>Streptophyta</taxon>
        <taxon>Embryophyta</taxon>
        <taxon>Tracheophyta</taxon>
        <taxon>Spermatophyta</taxon>
        <taxon>Magnoliopsida</taxon>
        <taxon>eudicotyledons</taxon>
        <taxon>Gunneridae</taxon>
        <taxon>Pentapetalae</taxon>
        <taxon>asterids</taxon>
        <taxon>lamiids</taxon>
        <taxon>Solanales</taxon>
        <taxon>Solanaceae</taxon>
        <taxon>Nicotianoideae</taxon>
        <taxon>Nicotianeae</taxon>
        <taxon>Nicotiana</taxon>
    </lineage>
</organism>
<keyword id="KW-0150">Chloroplast</keyword>
<keyword id="KW-0934">Plastid</keyword>
<keyword id="KW-1185">Reference proteome</keyword>